<keyword id="KW-0378">Hydrolase</keyword>
<organism>
    <name type="scientific">Escherichia coli O55:H7 (strain CB9615 / EPEC)</name>
    <dbReference type="NCBI Taxonomy" id="701177"/>
    <lineage>
        <taxon>Bacteria</taxon>
        <taxon>Pseudomonadati</taxon>
        <taxon>Pseudomonadota</taxon>
        <taxon>Gammaproteobacteria</taxon>
        <taxon>Enterobacterales</taxon>
        <taxon>Enterobacteriaceae</taxon>
        <taxon>Escherichia</taxon>
    </lineage>
</organism>
<gene>
    <name evidence="1" type="primary">rutB</name>
    <name type="ordered locus">G2583_1244</name>
</gene>
<accession>D3QPK4</accession>
<feature type="chain" id="PRO_0000402680" description="Ureidoacrylate amidohydrolase RutB">
    <location>
        <begin position="1"/>
        <end position="244"/>
    </location>
</feature>
<feature type="active site" description="Proton acceptor" evidence="1">
    <location>
        <position position="38"/>
    </location>
</feature>
<feature type="active site" evidence="1">
    <location>
        <position position="147"/>
    </location>
</feature>
<feature type="active site" description="Nucleophile" evidence="1">
    <location>
        <position position="180"/>
    </location>
</feature>
<name>RUTB_ECOCB</name>
<sequence>MPRPSPCADSGGGMMTTLTARPEAITFDPQQSALIVVDMQNAYATPGGYLDLAGFDVSTTRPVIANIQTAVTAARAAGMLIIWFQNGWDEQYVEAGGPGSPNFHKSNALKTMRKQPQLQGKLLAKGSWDYQLVDELVPQPGDIVLPKPRYSGFFNTPLDSILRSRGIRHLVFTGIATNVCVESTLRDGFFLEYFGVVLEDATHQAGPEFVQKAALFNIETFFGWVSDVETFCDALSPTSFARIA</sequence>
<evidence type="ECO:0000255" key="1">
    <source>
        <dbReference type="HAMAP-Rule" id="MF_00830"/>
    </source>
</evidence>
<comment type="function">
    <text evidence="1">Hydrolyzes ureidoacrylate to form aminoacrylate and carbamate. The carbamate hydrolyzes spontaneously, thereby releasing one of the nitrogen atoms of the pyrimidine ring as ammonia and one of its carbon atoms as CO2.</text>
</comment>
<comment type="catalytic activity">
    <reaction evidence="1">
        <text>(Z)-3-ureidoacrylate + H2O + H(+) = (Z)-3-aminoacrylate + NH4(+) + CO2</text>
        <dbReference type="Rhea" id="RHEA:42624"/>
        <dbReference type="ChEBI" id="CHEBI:15377"/>
        <dbReference type="ChEBI" id="CHEBI:15378"/>
        <dbReference type="ChEBI" id="CHEBI:16526"/>
        <dbReference type="ChEBI" id="CHEBI:28938"/>
        <dbReference type="ChEBI" id="CHEBI:59891"/>
        <dbReference type="ChEBI" id="CHEBI:59894"/>
        <dbReference type="EC" id="3.5.1.110"/>
    </reaction>
</comment>
<comment type="catalytic activity">
    <reaction evidence="1">
        <text>(Z)-3-ureidoacrylate + H2O = (Z)-3-aminoacrylate + carbamate + H(+)</text>
        <dbReference type="Rhea" id="RHEA:31603"/>
        <dbReference type="ChEBI" id="CHEBI:13941"/>
        <dbReference type="ChEBI" id="CHEBI:15377"/>
        <dbReference type="ChEBI" id="CHEBI:15378"/>
        <dbReference type="ChEBI" id="CHEBI:59891"/>
        <dbReference type="ChEBI" id="CHEBI:59894"/>
    </reaction>
</comment>
<comment type="catalytic activity">
    <reaction evidence="1">
        <text>(Z)-2-methylureidoacrylate + H2O + H(+) = (Z)-2-methylaminoacrylate + NH4(+) + CO2</text>
        <dbReference type="Rhea" id="RHEA:42620"/>
        <dbReference type="ChEBI" id="CHEBI:15377"/>
        <dbReference type="ChEBI" id="CHEBI:15378"/>
        <dbReference type="ChEBI" id="CHEBI:16526"/>
        <dbReference type="ChEBI" id="CHEBI:28938"/>
        <dbReference type="ChEBI" id="CHEBI:143783"/>
        <dbReference type="ChEBI" id="CHEBI:145735"/>
        <dbReference type="EC" id="3.5.1.110"/>
    </reaction>
</comment>
<comment type="induction">
    <text evidence="1">Up-regulated by the nitrogen regulatory protein C (NtrC also called GlnG) and repressed by RutR.</text>
</comment>
<comment type="similarity">
    <text evidence="1">Belongs to the isochorismatase family. RutB subfamily.</text>
</comment>
<reference key="1">
    <citation type="journal article" date="2010" name="PLoS ONE">
        <title>Derivation of Escherichia coli O157:H7 from its O55:H7 precursor.</title>
        <authorList>
            <person name="Zhou Z."/>
            <person name="Li X."/>
            <person name="Liu B."/>
            <person name="Beutin L."/>
            <person name="Xu J."/>
            <person name="Ren Y."/>
            <person name="Feng L."/>
            <person name="Lan R."/>
            <person name="Reeves P.R."/>
            <person name="Wang L."/>
        </authorList>
    </citation>
    <scope>NUCLEOTIDE SEQUENCE [LARGE SCALE GENOMIC DNA]</scope>
    <source>
        <strain>CB9615 / EPEC</strain>
    </source>
</reference>
<proteinExistence type="inferred from homology"/>
<dbReference type="EC" id="3.5.1.110" evidence="1"/>
<dbReference type="EMBL" id="CP001846">
    <property type="protein sequence ID" value="ADD55842.1"/>
    <property type="molecule type" value="Genomic_DNA"/>
</dbReference>
<dbReference type="SMR" id="D3QPK4"/>
<dbReference type="KEGG" id="eok:G2583_1244"/>
<dbReference type="HOGENOM" id="CLU_068979_8_0_6"/>
<dbReference type="GO" id="GO:0016811">
    <property type="term" value="F:hydrolase activity, acting on carbon-nitrogen (but not peptide) bonds, in linear amides"/>
    <property type="evidence" value="ECO:0007669"/>
    <property type="project" value="UniProtKB-UniRule"/>
</dbReference>
<dbReference type="GO" id="GO:0019740">
    <property type="term" value="P:nitrogen utilization"/>
    <property type="evidence" value="ECO:0007669"/>
    <property type="project" value="UniProtKB-UniRule"/>
</dbReference>
<dbReference type="GO" id="GO:0006212">
    <property type="term" value="P:uracil catabolic process"/>
    <property type="evidence" value="ECO:0007669"/>
    <property type="project" value="UniProtKB-UniRule"/>
</dbReference>
<dbReference type="CDD" id="cd00431">
    <property type="entry name" value="cysteine_hydrolases"/>
    <property type="match status" value="1"/>
</dbReference>
<dbReference type="FunFam" id="3.40.50.850:FF:000004">
    <property type="entry name" value="Peroxyureidoacrylate/ureidoacrylate amidohydrolase RutB"/>
    <property type="match status" value="1"/>
</dbReference>
<dbReference type="Gene3D" id="3.40.50.850">
    <property type="entry name" value="Isochorismatase-like"/>
    <property type="match status" value="1"/>
</dbReference>
<dbReference type="HAMAP" id="MF_00830">
    <property type="entry name" value="RutB"/>
    <property type="match status" value="1"/>
</dbReference>
<dbReference type="InterPro" id="IPR000868">
    <property type="entry name" value="Isochorismatase-like_dom"/>
</dbReference>
<dbReference type="InterPro" id="IPR050272">
    <property type="entry name" value="Isochorismatase-like_hydrls"/>
</dbReference>
<dbReference type="InterPro" id="IPR036380">
    <property type="entry name" value="Isochorismatase-like_sf"/>
</dbReference>
<dbReference type="InterPro" id="IPR019916">
    <property type="entry name" value="RutB"/>
</dbReference>
<dbReference type="NCBIfam" id="TIGR03614">
    <property type="entry name" value="RutB"/>
    <property type="match status" value="1"/>
</dbReference>
<dbReference type="PANTHER" id="PTHR43540:SF6">
    <property type="entry name" value="ISOCHORISMATASE-LIKE DOMAIN-CONTAINING PROTEIN"/>
    <property type="match status" value="1"/>
</dbReference>
<dbReference type="PANTHER" id="PTHR43540">
    <property type="entry name" value="PEROXYUREIDOACRYLATE/UREIDOACRYLATE AMIDOHYDROLASE-RELATED"/>
    <property type="match status" value="1"/>
</dbReference>
<dbReference type="Pfam" id="PF00857">
    <property type="entry name" value="Isochorismatase"/>
    <property type="match status" value="1"/>
</dbReference>
<dbReference type="SUPFAM" id="SSF52499">
    <property type="entry name" value="Isochorismatase-like hydrolases"/>
    <property type="match status" value="1"/>
</dbReference>
<protein>
    <recommendedName>
        <fullName evidence="1">Ureidoacrylate amidohydrolase RutB</fullName>
        <ecNumber evidence="1">3.5.1.110</ecNumber>
    </recommendedName>
</protein>